<feature type="chain" id="PRO_1000123867" description="Serine--tRNA ligase">
    <location>
        <begin position="1"/>
        <end position="424"/>
    </location>
</feature>
<feature type="binding site" evidence="1">
    <location>
        <begin position="231"/>
        <end position="233"/>
    </location>
    <ligand>
        <name>L-serine</name>
        <dbReference type="ChEBI" id="CHEBI:33384"/>
    </ligand>
</feature>
<feature type="binding site" evidence="1">
    <location>
        <begin position="262"/>
        <end position="264"/>
    </location>
    <ligand>
        <name>ATP</name>
        <dbReference type="ChEBI" id="CHEBI:30616"/>
    </ligand>
</feature>
<feature type="binding site" evidence="1">
    <location>
        <position position="285"/>
    </location>
    <ligand>
        <name>L-serine</name>
        <dbReference type="ChEBI" id="CHEBI:33384"/>
    </ligand>
</feature>
<feature type="binding site" evidence="1">
    <location>
        <begin position="349"/>
        <end position="352"/>
    </location>
    <ligand>
        <name>ATP</name>
        <dbReference type="ChEBI" id="CHEBI:30616"/>
    </ligand>
</feature>
<feature type="binding site" evidence="1">
    <location>
        <position position="385"/>
    </location>
    <ligand>
        <name>L-serine</name>
        <dbReference type="ChEBI" id="CHEBI:33384"/>
    </ligand>
</feature>
<proteinExistence type="inferred from homology"/>
<reference key="1">
    <citation type="submission" date="2009-04" db="EMBL/GenBank/DDBJ databases">
        <title>Genome sequence of Bacillus anthracis A0248.</title>
        <authorList>
            <person name="Dodson R.J."/>
            <person name="Munk A.C."/>
            <person name="Bruce D."/>
            <person name="Detter C."/>
            <person name="Tapia R."/>
            <person name="Sutton G."/>
            <person name="Sims D."/>
            <person name="Brettin T."/>
        </authorList>
    </citation>
    <scope>NUCLEOTIDE SEQUENCE [LARGE SCALE GENOMIC DNA]</scope>
    <source>
        <strain>A0248</strain>
    </source>
</reference>
<dbReference type="EC" id="6.1.1.11" evidence="1"/>
<dbReference type="EMBL" id="CP001598">
    <property type="protein sequence ID" value="ACQ46636.1"/>
    <property type="molecule type" value="Genomic_DNA"/>
</dbReference>
<dbReference type="RefSeq" id="WP_000884181.1">
    <property type="nucleotide sequence ID" value="NC_012659.1"/>
</dbReference>
<dbReference type="SMR" id="C3P9G2"/>
<dbReference type="GeneID" id="69534454"/>
<dbReference type="KEGG" id="bai:BAA_0018"/>
<dbReference type="HOGENOM" id="CLU_023797_1_1_9"/>
<dbReference type="UniPathway" id="UPA00906">
    <property type="reaction ID" value="UER00895"/>
</dbReference>
<dbReference type="GO" id="GO:0005737">
    <property type="term" value="C:cytoplasm"/>
    <property type="evidence" value="ECO:0007669"/>
    <property type="project" value="UniProtKB-SubCell"/>
</dbReference>
<dbReference type="GO" id="GO:0005524">
    <property type="term" value="F:ATP binding"/>
    <property type="evidence" value="ECO:0007669"/>
    <property type="project" value="UniProtKB-UniRule"/>
</dbReference>
<dbReference type="GO" id="GO:0140096">
    <property type="term" value="F:catalytic activity, acting on a protein"/>
    <property type="evidence" value="ECO:0007669"/>
    <property type="project" value="UniProtKB-ARBA"/>
</dbReference>
<dbReference type="GO" id="GO:0004828">
    <property type="term" value="F:serine-tRNA ligase activity"/>
    <property type="evidence" value="ECO:0007669"/>
    <property type="project" value="UniProtKB-UniRule"/>
</dbReference>
<dbReference type="GO" id="GO:0016740">
    <property type="term" value="F:transferase activity"/>
    <property type="evidence" value="ECO:0007669"/>
    <property type="project" value="UniProtKB-ARBA"/>
</dbReference>
<dbReference type="GO" id="GO:0016260">
    <property type="term" value="P:selenocysteine biosynthetic process"/>
    <property type="evidence" value="ECO:0007669"/>
    <property type="project" value="UniProtKB-UniRule"/>
</dbReference>
<dbReference type="GO" id="GO:0006434">
    <property type="term" value="P:seryl-tRNA aminoacylation"/>
    <property type="evidence" value="ECO:0007669"/>
    <property type="project" value="UniProtKB-UniRule"/>
</dbReference>
<dbReference type="CDD" id="cd00770">
    <property type="entry name" value="SerRS_core"/>
    <property type="match status" value="1"/>
</dbReference>
<dbReference type="Gene3D" id="3.30.930.10">
    <property type="entry name" value="Bira Bifunctional Protein, Domain 2"/>
    <property type="match status" value="1"/>
</dbReference>
<dbReference type="Gene3D" id="1.10.287.40">
    <property type="entry name" value="Serine-tRNA synthetase, tRNA binding domain"/>
    <property type="match status" value="1"/>
</dbReference>
<dbReference type="HAMAP" id="MF_00176">
    <property type="entry name" value="Ser_tRNA_synth_type1"/>
    <property type="match status" value="1"/>
</dbReference>
<dbReference type="InterPro" id="IPR002314">
    <property type="entry name" value="aa-tRNA-synt_IIb"/>
</dbReference>
<dbReference type="InterPro" id="IPR006195">
    <property type="entry name" value="aa-tRNA-synth_II"/>
</dbReference>
<dbReference type="InterPro" id="IPR045864">
    <property type="entry name" value="aa-tRNA-synth_II/BPL/LPL"/>
</dbReference>
<dbReference type="InterPro" id="IPR002317">
    <property type="entry name" value="Ser-tRNA-ligase_type_1"/>
</dbReference>
<dbReference type="InterPro" id="IPR015866">
    <property type="entry name" value="Ser-tRNA-synth_1_N"/>
</dbReference>
<dbReference type="InterPro" id="IPR042103">
    <property type="entry name" value="SerRS_1_N_sf"/>
</dbReference>
<dbReference type="InterPro" id="IPR033729">
    <property type="entry name" value="SerRS_core"/>
</dbReference>
<dbReference type="InterPro" id="IPR010978">
    <property type="entry name" value="tRNA-bd_arm"/>
</dbReference>
<dbReference type="NCBIfam" id="TIGR00414">
    <property type="entry name" value="serS"/>
    <property type="match status" value="1"/>
</dbReference>
<dbReference type="PANTHER" id="PTHR43697:SF1">
    <property type="entry name" value="SERINE--TRNA LIGASE"/>
    <property type="match status" value="1"/>
</dbReference>
<dbReference type="PANTHER" id="PTHR43697">
    <property type="entry name" value="SERYL-TRNA SYNTHETASE"/>
    <property type="match status" value="1"/>
</dbReference>
<dbReference type="Pfam" id="PF02403">
    <property type="entry name" value="Seryl_tRNA_N"/>
    <property type="match status" value="1"/>
</dbReference>
<dbReference type="Pfam" id="PF00587">
    <property type="entry name" value="tRNA-synt_2b"/>
    <property type="match status" value="1"/>
</dbReference>
<dbReference type="PIRSF" id="PIRSF001529">
    <property type="entry name" value="Ser-tRNA-synth_IIa"/>
    <property type="match status" value="1"/>
</dbReference>
<dbReference type="PRINTS" id="PR00981">
    <property type="entry name" value="TRNASYNTHSER"/>
</dbReference>
<dbReference type="SUPFAM" id="SSF55681">
    <property type="entry name" value="Class II aaRS and biotin synthetases"/>
    <property type="match status" value="1"/>
</dbReference>
<dbReference type="SUPFAM" id="SSF46589">
    <property type="entry name" value="tRNA-binding arm"/>
    <property type="match status" value="1"/>
</dbReference>
<dbReference type="PROSITE" id="PS50862">
    <property type="entry name" value="AA_TRNA_LIGASE_II"/>
    <property type="match status" value="1"/>
</dbReference>
<keyword id="KW-0030">Aminoacyl-tRNA synthetase</keyword>
<keyword id="KW-0067">ATP-binding</keyword>
<keyword id="KW-0963">Cytoplasm</keyword>
<keyword id="KW-0436">Ligase</keyword>
<keyword id="KW-0547">Nucleotide-binding</keyword>
<keyword id="KW-0648">Protein biosynthesis</keyword>
<name>SYS_BACAA</name>
<organism>
    <name type="scientific">Bacillus anthracis (strain A0248)</name>
    <dbReference type="NCBI Taxonomy" id="592021"/>
    <lineage>
        <taxon>Bacteria</taxon>
        <taxon>Bacillati</taxon>
        <taxon>Bacillota</taxon>
        <taxon>Bacilli</taxon>
        <taxon>Bacillales</taxon>
        <taxon>Bacillaceae</taxon>
        <taxon>Bacillus</taxon>
        <taxon>Bacillus cereus group</taxon>
    </lineage>
</organism>
<accession>C3P9G2</accession>
<protein>
    <recommendedName>
        <fullName evidence="1">Serine--tRNA ligase</fullName>
        <ecNumber evidence="1">6.1.1.11</ecNumber>
    </recommendedName>
    <alternativeName>
        <fullName evidence="1">Seryl-tRNA synthetase</fullName>
        <shortName evidence="1">SerRS</shortName>
    </alternativeName>
    <alternativeName>
        <fullName evidence="1">Seryl-tRNA(Ser/Sec) synthetase</fullName>
    </alternativeName>
</protein>
<evidence type="ECO:0000255" key="1">
    <source>
        <dbReference type="HAMAP-Rule" id="MF_00176"/>
    </source>
</evidence>
<gene>
    <name evidence="1" type="primary">serS</name>
    <name type="ordered locus">BAA_0018</name>
</gene>
<comment type="function">
    <text evidence="1">Catalyzes the attachment of serine to tRNA(Ser). Is also able to aminoacylate tRNA(Sec) with serine, to form the misacylated tRNA L-seryl-tRNA(Sec), which will be further converted into selenocysteinyl-tRNA(Sec).</text>
</comment>
<comment type="catalytic activity">
    <reaction evidence="1">
        <text>tRNA(Ser) + L-serine + ATP = L-seryl-tRNA(Ser) + AMP + diphosphate + H(+)</text>
        <dbReference type="Rhea" id="RHEA:12292"/>
        <dbReference type="Rhea" id="RHEA-COMP:9669"/>
        <dbReference type="Rhea" id="RHEA-COMP:9703"/>
        <dbReference type="ChEBI" id="CHEBI:15378"/>
        <dbReference type="ChEBI" id="CHEBI:30616"/>
        <dbReference type="ChEBI" id="CHEBI:33019"/>
        <dbReference type="ChEBI" id="CHEBI:33384"/>
        <dbReference type="ChEBI" id="CHEBI:78442"/>
        <dbReference type="ChEBI" id="CHEBI:78533"/>
        <dbReference type="ChEBI" id="CHEBI:456215"/>
        <dbReference type="EC" id="6.1.1.11"/>
    </reaction>
</comment>
<comment type="catalytic activity">
    <reaction evidence="1">
        <text>tRNA(Sec) + L-serine + ATP = L-seryl-tRNA(Sec) + AMP + diphosphate + H(+)</text>
        <dbReference type="Rhea" id="RHEA:42580"/>
        <dbReference type="Rhea" id="RHEA-COMP:9742"/>
        <dbReference type="Rhea" id="RHEA-COMP:10128"/>
        <dbReference type="ChEBI" id="CHEBI:15378"/>
        <dbReference type="ChEBI" id="CHEBI:30616"/>
        <dbReference type="ChEBI" id="CHEBI:33019"/>
        <dbReference type="ChEBI" id="CHEBI:33384"/>
        <dbReference type="ChEBI" id="CHEBI:78442"/>
        <dbReference type="ChEBI" id="CHEBI:78533"/>
        <dbReference type="ChEBI" id="CHEBI:456215"/>
        <dbReference type="EC" id="6.1.1.11"/>
    </reaction>
</comment>
<comment type="pathway">
    <text evidence="1">Aminoacyl-tRNA biosynthesis; selenocysteinyl-tRNA(Sec) biosynthesis; L-seryl-tRNA(Sec) from L-serine and tRNA(Sec): step 1/1.</text>
</comment>
<comment type="subunit">
    <text evidence="1">Homodimer. The tRNA molecule binds across the dimer.</text>
</comment>
<comment type="subcellular location">
    <subcellularLocation>
        <location evidence="1">Cytoplasm</location>
    </subcellularLocation>
</comment>
<comment type="domain">
    <text evidence="1">Consists of two distinct domains, a catalytic core and a N-terminal extension that is involved in tRNA binding.</text>
</comment>
<comment type="similarity">
    <text evidence="1">Belongs to the class-II aminoacyl-tRNA synthetase family. Type-1 seryl-tRNA synthetase subfamily.</text>
</comment>
<sequence length="424" mass="48744">MLDIKFLRTNFEEVKAKLQHRGEDLTDFGRFEELDTRRRELLVQTEELKSKRNEVSQQISVLKREKKDAEALILEMREVGEKVKDLDNELRTVEEDLERLMLSIPNIPHESAPVGETEDDNVVARTWGEVKEFAFEPKPHWDLATDLGILDFERAGKVTGSRFVFYKGAGARLERALISFMLDLHTDEHGYEEVLPPYMVNRASMTGTGQLPKFEEDAFRIESEDYFLIPTAEVPVTNMHRDEILNKEQLPIRYAAFSSCFRSEAGSAGRDTRGLIRQHQFNKVELVKFVKPEDSYEELEKLTNDAERVLQLLELPYRVMSMCTGDLGFTAAKKYDIEVWIPSYGTYREISSCSNFEAFQARRANIRFRREPNGKPEHVHTLNGSGLAIGRTVAAILENYQQEDGTIIIPEVLRPYMGGKTVIK</sequence>